<keyword id="KW-0349">Heme</keyword>
<keyword id="KW-0376">Hydrogen peroxide</keyword>
<keyword id="KW-0408">Iron</keyword>
<keyword id="KW-0479">Metal-binding</keyword>
<keyword id="KW-0560">Oxidoreductase</keyword>
<keyword id="KW-0575">Peroxidase</keyword>
<keyword id="KW-1185">Reference proteome</keyword>
<feature type="chain" id="PRO_0000354762" description="Catalase-peroxidase">
    <location>
        <begin position="1"/>
        <end position="726"/>
    </location>
</feature>
<feature type="region of interest" description="Disordered" evidence="2">
    <location>
        <begin position="1"/>
        <end position="34"/>
    </location>
</feature>
<feature type="active site" description="Proton acceptor" evidence="1">
    <location>
        <position position="106"/>
    </location>
</feature>
<feature type="binding site" description="axial binding residue" evidence="1">
    <location>
        <position position="267"/>
    </location>
    <ligand>
        <name>heme b</name>
        <dbReference type="ChEBI" id="CHEBI:60344"/>
    </ligand>
    <ligandPart>
        <name>Fe</name>
        <dbReference type="ChEBI" id="CHEBI:18248"/>
    </ligandPart>
</feature>
<feature type="site" description="Transition state stabilizer" evidence="1">
    <location>
        <position position="102"/>
    </location>
</feature>
<feature type="cross-link" description="Tryptophyl-tyrosyl-methioninium (Trp-Tyr) (with M-252)" evidence="1">
    <location>
        <begin position="105"/>
        <end position="226"/>
    </location>
</feature>
<feature type="cross-link" description="Tryptophyl-tyrosyl-methioninium (Tyr-Met) (with W-105)" evidence="1">
    <location>
        <begin position="226"/>
        <end position="252"/>
    </location>
</feature>
<accession>A8AKX8</accession>
<name>KATG_CITK8</name>
<comment type="function">
    <text evidence="1">Bifunctional enzyme with both catalase and broad-spectrum peroxidase activity.</text>
</comment>
<comment type="catalytic activity">
    <reaction evidence="1">
        <text>H2O2 + AH2 = A + 2 H2O</text>
        <dbReference type="Rhea" id="RHEA:30275"/>
        <dbReference type="ChEBI" id="CHEBI:13193"/>
        <dbReference type="ChEBI" id="CHEBI:15377"/>
        <dbReference type="ChEBI" id="CHEBI:16240"/>
        <dbReference type="ChEBI" id="CHEBI:17499"/>
        <dbReference type="EC" id="1.11.1.21"/>
    </reaction>
</comment>
<comment type="catalytic activity">
    <reaction evidence="1">
        <text>2 H2O2 = O2 + 2 H2O</text>
        <dbReference type="Rhea" id="RHEA:20309"/>
        <dbReference type="ChEBI" id="CHEBI:15377"/>
        <dbReference type="ChEBI" id="CHEBI:15379"/>
        <dbReference type="ChEBI" id="CHEBI:16240"/>
        <dbReference type="EC" id="1.11.1.21"/>
    </reaction>
</comment>
<comment type="cofactor">
    <cofactor evidence="1">
        <name>heme b</name>
        <dbReference type="ChEBI" id="CHEBI:60344"/>
    </cofactor>
    <text evidence="1">Binds 1 heme b (iron(II)-protoporphyrin IX) group per dimer.</text>
</comment>
<comment type="subunit">
    <text evidence="1">Homodimer or homotetramer.</text>
</comment>
<comment type="PTM">
    <text evidence="1">Formation of the three residue Trp-Tyr-Met cross-link is important for the catalase, but not the peroxidase activity of the enzyme.</text>
</comment>
<comment type="similarity">
    <text evidence="1">Belongs to the peroxidase family. Peroxidase/catalase subfamily.</text>
</comment>
<gene>
    <name evidence="1" type="primary">katG</name>
    <name type="ordered locus">CKO_03050</name>
</gene>
<proteinExistence type="inferred from homology"/>
<organism>
    <name type="scientific">Citrobacter koseri (strain ATCC BAA-895 / CDC 4225-83 / SGSC4696)</name>
    <dbReference type="NCBI Taxonomy" id="290338"/>
    <lineage>
        <taxon>Bacteria</taxon>
        <taxon>Pseudomonadati</taxon>
        <taxon>Pseudomonadota</taxon>
        <taxon>Gammaproteobacteria</taxon>
        <taxon>Enterobacterales</taxon>
        <taxon>Enterobacteriaceae</taxon>
        <taxon>Citrobacter</taxon>
    </lineage>
</organism>
<dbReference type="EC" id="1.11.1.21" evidence="1"/>
<dbReference type="EMBL" id="CP000822">
    <property type="protein sequence ID" value="ABV14141.1"/>
    <property type="molecule type" value="Genomic_DNA"/>
</dbReference>
<dbReference type="RefSeq" id="WP_012133848.1">
    <property type="nucleotide sequence ID" value="NC_009792.1"/>
</dbReference>
<dbReference type="SMR" id="A8AKX8"/>
<dbReference type="STRING" id="290338.CKO_03050"/>
<dbReference type="GeneID" id="45136857"/>
<dbReference type="KEGG" id="cko:CKO_03050"/>
<dbReference type="HOGENOM" id="CLU_025424_2_0_6"/>
<dbReference type="OrthoDB" id="9759743at2"/>
<dbReference type="Proteomes" id="UP000008148">
    <property type="component" value="Chromosome"/>
</dbReference>
<dbReference type="GO" id="GO:0005829">
    <property type="term" value="C:cytosol"/>
    <property type="evidence" value="ECO:0007669"/>
    <property type="project" value="TreeGrafter"/>
</dbReference>
<dbReference type="GO" id="GO:0004096">
    <property type="term" value="F:catalase activity"/>
    <property type="evidence" value="ECO:0007669"/>
    <property type="project" value="UniProtKB-UniRule"/>
</dbReference>
<dbReference type="GO" id="GO:0020037">
    <property type="term" value="F:heme binding"/>
    <property type="evidence" value="ECO:0007669"/>
    <property type="project" value="InterPro"/>
</dbReference>
<dbReference type="GO" id="GO:0046872">
    <property type="term" value="F:metal ion binding"/>
    <property type="evidence" value="ECO:0007669"/>
    <property type="project" value="UniProtKB-KW"/>
</dbReference>
<dbReference type="GO" id="GO:0070301">
    <property type="term" value="P:cellular response to hydrogen peroxide"/>
    <property type="evidence" value="ECO:0007669"/>
    <property type="project" value="TreeGrafter"/>
</dbReference>
<dbReference type="GO" id="GO:0042744">
    <property type="term" value="P:hydrogen peroxide catabolic process"/>
    <property type="evidence" value="ECO:0007669"/>
    <property type="project" value="UniProtKB-KW"/>
</dbReference>
<dbReference type="CDD" id="cd08200">
    <property type="entry name" value="catalase_peroxidase_2"/>
    <property type="match status" value="1"/>
</dbReference>
<dbReference type="FunFam" id="1.10.420.10:FF:000002">
    <property type="entry name" value="Catalase-peroxidase"/>
    <property type="match status" value="1"/>
</dbReference>
<dbReference type="FunFam" id="1.10.420.10:FF:000004">
    <property type="entry name" value="Catalase-peroxidase"/>
    <property type="match status" value="1"/>
</dbReference>
<dbReference type="FunFam" id="1.10.520.10:FF:000002">
    <property type="entry name" value="Catalase-peroxidase"/>
    <property type="match status" value="1"/>
</dbReference>
<dbReference type="Gene3D" id="1.10.520.10">
    <property type="match status" value="2"/>
</dbReference>
<dbReference type="Gene3D" id="1.10.420.10">
    <property type="entry name" value="Peroxidase, domain 2"/>
    <property type="match status" value="2"/>
</dbReference>
<dbReference type="HAMAP" id="MF_01961">
    <property type="entry name" value="Catal_peroxid"/>
    <property type="match status" value="1"/>
</dbReference>
<dbReference type="InterPro" id="IPR000763">
    <property type="entry name" value="Catalase_peroxidase"/>
</dbReference>
<dbReference type="InterPro" id="IPR002016">
    <property type="entry name" value="Haem_peroxidase"/>
</dbReference>
<dbReference type="InterPro" id="IPR010255">
    <property type="entry name" value="Haem_peroxidase_sf"/>
</dbReference>
<dbReference type="InterPro" id="IPR019794">
    <property type="entry name" value="Peroxidases_AS"/>
</dbReference>
<dbReference type="InterPro" id="IPR019793">
    <property type="entry name" value="Peroxidases_heam-ligand_BS"/>
</dbReference>
<dbReference type="NCBIfam" id="TIGR00198">
    <property type="entry name" value="cat_per_HPI"/>
    <property type="match status" value="1"/>
</dbReference>
<dbReference type="NCBIfam" id="NF011635">
    <property type="entry name" value="PRK15061.1"/>
    <property type="match status" value="1"/>
</dbReference>
<dbReference type="PANTHER" id="PTHR30555:SF0">
    <property type="entry name" value="CATALASE-PEROXIDASE"/>
    <property type="match status" value="1"/>
</dbReference>
<dbReference type="PANTHER" id="PTHR30555">
    <property type="entry name" value="HYDROPEROXIDASE I, BIFUNCTIONAL CATALASE-PEROXIDASE"/>
    <property type="match status" value="1"/>
</dbReference>
<dbReference type="Pfam" id="PF00141">
    <property type="entry name" value="peroxidase"/>
    <property type="match status" value="2"/>
</dbReference>
<dbReference type="PRINTS" id="PR00460">
    <property type="entry name" value="BPEROXIDASE"/>
</dbReference>
<dbReference type="PRINTS" id="PR00458">
    <property type="entry name" value="PEROXIDASE"/>
</dbReference>
<dbReference type="SUPFAM" id="SSF48113">
    <property type="entry name" value="Heme-dependent peroxidases"/>
    <property type="match status" value="2"/>
</dbReference>
<dbReference type="PROSITE" id="PS00435">
    <property type="entry name" value="PEROXIDASE_1"/>
    <property type="match status" value="1"/>
</dbReference>
<dbReference type="PROSITE" id="PS00436">
    <property type="entry name" value="PEROXIDASE_2"/>
    <property type="match status" value="1"/>
</dbReference>
<dbReference type="PROSITE" id="PS50873">
    <property type="entry name" value="PEROXIDASE_4"/>
    <property type="match status" value="1"/>
</dbReference>
<sequence>MSMSDDTHNSLSTGKCPFHQGSHDRSAGAGTSSHDWWPNQLRVDLLNQHSNRSNPLGEDFDYRKEFSKLDYSALKGDLKALLSDSQPWWPADWGSYAGLFIRMAWHGAGTYRSVDGRGGAGRGQQRFAPLNSWPDNVSLDKARRLLWPIKQKYGQKISWADLFILAGNVALENSGFRTFGFGAGREDVWEPDLDVNWGDEKAWLTHRHPEALAKAPLGATEMGLIYVNPEGPDHSGEPLSAAAAIRATFGNMGMNDEETVALIGGGHTLGKTHGAAAASHVGVDPEAAPIELQGLGWSSDYGSGAGGDAITSGLEVVWSQTPTQWSNYFFENLFKYEWVQTRSPAGAIQFEAVDAPEIIPDPFDPSKKRKPTMLVTDLTLRFDPEFEKISRRFLNDPQAFNEAFARAWFKLTHRDMGPKARYIGPEVPKEDLIWQDPLPQPVFNPSQEDIVNLKAAIAASGLSVSELVSVAWASASTFRGGDKRGGANGARLALAPQRDWDVNAAAARVLPVLEEIQKSSGKASLADIIVLAGVVGVEQAASAAGVSISVPFAPGRVDARQDQTDIEMFELLEPIADGFRNYRARLDVSTTESLLIDKAQQLTLTAPEMTALVGGMRVLGANFDGSQNGVFTDRPGVLSNDFFVNLLDMRNEWKAADESKELFEGRDRLSGEVKFTATRADLVFGSNSVLRALAEVYASSDAREKFVKDFVAAWVKVMNLDRFDLL</sequence>
<evidence type="ECO:0000255" key="1">
    <source>
        <dbReference type="HAMAP-Rule" id="MF_01961"/>
    </source>
</evidence>
<evidence type="ECO:0000256" key="2">
    <source>
        <dbReference type="SAM" id="MobiDB-lite"/>
    </source>
</evidence>
<protein>
    <recommendedName>
        <fullName evidence="1">Catalase-peroxidase</fullName>
        <shortName evidence="1">CP</shortName>
        <ecNumber evidence="1">1.11.1.21</ecNumber>
    </recommendedName>
    <alternativeName>
        <fullName evidence="1">Peroxidase/catalase</fullName>
    </alternativeName>
</protein>
<reference key="1">
    <citation type="submission" date="2007-08" db="EMBL/GenBank/DDBJ databases">
        <authorList>
            <consortium name="The Citrobacter koseri Genome Sequencing Project"/>
            <person name="McClelland M."/>
            <person name="Sanderson E.K."/>
            <person name="Porwollik S."/>
            <person name="Spieth J."/>
            <person name="Clifton W.S."/>
            <person name="Latreille P."/>
            <person name="Courtney L."/>
            <person name="Wang C."/>
            <person name="Pepin K."/>
            <person name="Bhonagiri V."/>
            <person name="Nash W."/>
            <person name="Johnson M."/>
            <person name="Thiruvilangam P."/>
            <person name="Wilson R."/>
        </authorList>
    </citation>
    <scope>NUCLEOTIDE SEQUENCE [LARGE SCALE GENOMIC DNA]</scope>
    <source>
        <strain>ATCC BAA-895 / CDC 4225-83 / SGSC4696</strain>
    </source>
</reference>